<gene>
    <name evidence="1" type="primary">infC</name>
    <name type="ordered locus">CBU_1325</name>
</gene>
<accession>Q83C11</accession>
<sequence>MRSKRTRVNNQIRVPEVRLIDEKGEQVGVVRTDRALTMAEEAGLDLVEISPTAKPPVCRIMNFGKYQFEQSKRKAAQKKKQRLVHLKEVKFRPGTDVGDYQVKLRKIATFLDRGDKVKVSLRFRGREMQHRELGLELLGRVKRDLGNIVVEQEPRLEGRQMTMVVMKAKGEGNKTKREDHAEIKD</sequence>
<keyword id="KW-0963">Cytoplasm</keyword>
<keyword id="KW-0396">Initiation factor</keyword>
<keyword id="KW-0648">Protein biosynthesis</keyword>
<keyword id="KW-1185">Reference proteome</keyword>
<proteinExistence type="inferred from homology"/>
<comment type="function">
    <text evidence="1">IF-3 binds to the 30S ribosomal subunit and shifts the equilibrium between 70S ribosomes and their 50S and 30S subunits in favor of the free subunits, thus enhancing the availability of 30S subunits on which protein synthesis initiation begins.</text>
</comment>
<comment type="subunit">
    <text evidence="1">Monomer.</text>
</comment>
<comment type="subcellular location">
    <subcellularLocation>
        <location evidence="1">Cytoplasm</location>
    </subcellularLocation>
</comment>
<comment type="similarity">
    <text evidence="1">Belongs to the IF-3 family.</text>
</comment>
<comment type="sequence caution" evidence="2">
    <conflict type="erroneous initiation">
        <sequence resource="EMBL-CDS" id="AAO90829"/>
    </conflict>
</comment>
<evidence type="ECO:0000255" key="1">
    <source>
        <dbReference type="HAMAP-Rule" id="MF_00080"/>
    </source>
</evidence>
<evidence type="ECO:0000305" key="2"/>
<name>IF3_COXBU</name>
<dbReference type="EMBL" id="AE016828">
    <property type="protein sequence ID" value="AAO90829.1"/>
    <property type="status" value="ALT_INIT"/>
    <property type="molecule type" value="Genomic_DNA"/>
</dbReference>
<dbReference type="RefSeq" id="NP_820315.1">
    <property type="nucleotide sequence ID" value="NC_002971.3"/>
</dbReference>
<dbReference type="RefSeq" id="WP_005770939.1">
    <property type="nucleotide sequence ID" value="NC_002971.4"/>
</dbReference>
<dbReference type="RefSeq" id="WP_061299200.1">
    <property type="nucleotide sequence ID" value="NZ_CDBG01000001.1"/>
</dbReference>
<dbReference type="SMR" id="Q83C11"/>
<dbReference type="STRING" id="227377.CBU_1325"/>
<dbReference type="EnsemblBacteria" id="AAO90829">
    <property type="protein sequence ID" value="AAO90829"/>
    <property type="gene ID" value="CBU_1325"/>
</dbReference>
<dbReference type="GeneID" id="1209231"/>
<dbReference type="KEGG" id="cbu:CBU_1325"/>
<dbReference type="PATRIC" id="fig|227377.7.peg.1316"/>
<dbReference type="eggNOG" id="COG0290">
    <property type="taxonomic scope" value="Bacteria"/>
</dbReference>
<dbReference type="HOGENOM" id="CLU_054919_3_2_6"/>
<dbReference type="OrthoDB" id="9806014at2"/>
<dbReference type="Proteomes" id="UP000002671">
    <property type="component" value="Chromosome"/>
</dbReference>
<dbReference type="GO" id="GO:0005829">
    <property type="term" value="C:cytosol"/>
    <property type="evidence" value="ECO:0000318"/>
    <property type="project" value="GO_Central"/>
</dbReference>
<dbReference type="GO" id="GO:0043022">
    <property type="term" value="F:ribosome binding"/>
    <property type="evidence" value="ECO:0000318"/>
    <property type="project" value="GO_Central"/>
</dbReference>
<dbReference type="GO" id="GO:0003743">
    <property type="term" value="F:translation initiation factor activity"/>
    <property type="evidence" value="ECO:0000318"/>
    <property type="project" value="GO_Central"/>
</dbReference>
<dbReference type="GO" id="GO:0032790">
    <property type="term" value="P:ribosome disassembly"/>
    <property type="evidence" value="ECO:0000318"/>
    <property type="project" value="GO_Central"/>
</dbReference>
<dbReference type="FunFam" id="3.10.20.80:FF:000001">
    <property type="entry name" value="Translation initiation factor IF-3"/>
    <property type="match status" value="1"/>
</dbReference>
<dbReference type="FunFam" id="3.30.110.10:FF:000001">
    <property type="entry name" value="Translation initiation factor IF-3"/>
    <property type="match status" value="1"/>
</dbReference>
<dbReference type="Gene3D" id="3.30.110.10">
    <property type="entry name" value="Translation initiation factor 3 (IF-3), C-terminal domain"/>
    <property type="match status" value="1"/>
</dbReference>
<dbReference type="Gene3D" id="3.10.20.80">
    <property type="entry name" value="Translation initiation factor 3 (IF-3), N-terminal domain"/>
    <property type="match status" value="1"/>
</dbReference>
<dbReference type="HAMAP" id="MF_00080">
    <property type="entry name" value="IF_3"/>
    <property type="match status" value="1"/>
</dbReference>
<dbReference type="InterPro" id="IPR036788">
    <property type="entry name" value="T_IF-3_C_sf"/>
</dbReference>
<dbReference type="InterPro" id="IPR036787">
    <property type="entry name" value="T_IF-3_N_sf"/>
</dbReference>
<dbReference type="InterPro" id="IPR019813">
    <property type="entry name" value="Translation_initiation_fac3_CS"/>
</dbReference>
<dbReference type="InterPro" id="IPR001288">
    <property type="entry name" value="Translation_initiation_fac_3"/>
</dbReference>
<dbReference type="InterPro" id="IPR019815">
    <property type="entry name" value="Translation_initiation_fac_3_C"/>
</dbReference>
<dbReference type="InterPro" id="IPR019814">
    <property type="entry name" value="Translation_initiation_fac_3_N"/>
</dbReference>
<dbReference type="NCBIfam" id="TIGR00168">
    <property type="entry name" value="infC"/>
    <property type="match status" value="1"/>
</dbReference>
<dbReference type="PANTHER" id="PTHR10938">
    <property type="entry name" value="TRANSLATION INITIATION FACTOR IF-3"/>
    <property type="match status" value="1"/>
</dbReference>
<dbReference type="PANTHER" id="PTHR10938:SF0">
    <property type="entry name" value="TRANSLATION INITIATION FACTOR IF-3, MITOCHONDRIAL"/>
    <property type="match status" value="1"/>
</dbReference>
<dbReference type="Pfam" id="PF00707">
    <property type="entry name" value="IF3_C"/>
    <property type="match status" value="1"/>
</dbReference>
<dbReference type="Pfam" id="PF05198">
    <property type="entry name" value="IF3_N"/>
    <property type="match status" value="1"/>
</dbReference>
<dbReference type="SUPFAM" id="SSF55200">
    <property type="entry name" value="Translation initiation factor IF3, C-terminal domain"/>
    <property type="match status" value="1"/>
</dbReference>
<dbReference type="SUPFAM" id="SSF54364">
    <property type="entry name" value="Translation initiation factor IF3, N-terminal domain"/>
    <property type="match status" value="1"/>
</dbReference>
<dbReference type="PROSITE" id="PS00938">
    <property type="entry name" value="IF3"/>
    <property type="match status" value="1"/>
</dbReference>
<feature type="chain" id="PRO_0000177513" description="Translation initiation factor IF-3">
    <location>
        <begin position="1"/>
        <end position="185"/>
    </location>
</feature>
<reference key="1">
    <citation type="journal article" date="2003" name="Proc. Natl. Acad. Sci. U.S.A.">
        <title>Complete genome sequence of the Q-fever pathogen, Coxiella burnetii.</title>
        <authorList>
            <person name="Seshadri R."/>
            <person name="Paulsen I.T."/>
            <person name="Eisen J.A."/>
            <person name="Read T.D."/>
            <person name="Nelson K.E."/>
            <person name="Nelson W.C."/>
            <person name="Ward N.L."/>
            <person name="Tettelin H."/>
            <person name="Davidsen T.M."/>
            <person name="Beanan M.J."/>
            <person name="DeBoy R.T."/>
            <person name="Daugherty S.C."/>
            <person name="Brinkac L.M."/>
            <person name="Madupu R."/>
            <person name="Dodson R.J."/>
            <person name="Khouri H.M."/>
            <person name="Lee K.H."/>
            <person name="Carty H.A."/>
            <person name="Scanlan D."/>
            <person name="Heinzen R.A."/>
            <person name="Thompson H.A."/>
            <person name="Samuel J.E."/>
            <person name="Fraser C.M."/>
            <person name="Heidelberg J.F."/>
        </authorList>
    </citation>
    <scope>NUCLEOTIDE SEQUENCE [LARGE SCALE GENOMIC DNA]</scope>
    <source>
        <strain>RSA 493 / Nine Mile phase I</strain>
    </source>
</reference>
<organism>
    <name type="scientific">Coxiella burnetii (strain RSA 493 / Nine Mile phase I)</name>
    <dbReference type="NCBI Taxonomy" id="227377"/>
    <lineage>
        <taxon>Bacteria</taxon>
        <taxon>Pseudomonadati</taxon>
        <taxon>Pseudomonadota</taxon>
        <taxon>Gammaproteobacteria</taxon>
        <taxon>Legionellales</taxon>
        <taxon>Coxiellaceae</taxon>
        <taxon>Coxiella</taxon>
    </lineage>
</organism>
<protein>
    <recommendedName>
        <fullName evidence="1">Translation initiation factor IF-3</fullName>
    </recommendedName>
</protein>